<keyword id="KW-0067">ATP-binding</keyword>
<keyword id="KW-0227">DNA damage</keyword>
<keyword id="KW-0234">DNA repair</keyword>
<keyword id="KW-0238">DNA-binding</keyword>
<keyword id="KW-0547">Nucleotide-binding</keyword>
<keyword id="KW-1185">Reference proteome</keyword>
<name>MUTS_TRIL1</name>
<sequence>MSSALQTPMMRQYLEIKAQHPESILFFRMGDFYEMFLDDALVASRILDITLTSRNKNSADEIPFCGVPFHSAQPYIARLVEAGYRVAVCEQIEDPKQTKGLVKRDVVKVVTPALVTESESLTPDENSFLLALCSSGQRWGCAWLDLSTGEFLTANSDNLAGAATLLASIAPRELLLPDQLRRDLPPELALVAGDRPRAAVADWVLDKDYCSKLICSQFGVASPEMLGLAVTELSEALLATGMVLHYLQENRHATLPHLRDLTIVRQNDHLALDPATRRNLELTATMTDNKKSGSLLGCLDRTATAMGARTLKQWLSYPLVQVAPIRRRLEAVEELKENPALQDQLREQLKGVHDLERLNGRVSMAGAGGRDLRSLHDSLEQVPQIRLALTEATAPLLRDLTEELDPLQDIRSLINQAIAPAPPFSLREGGIIADGYHAELDELRAISREGKGYIARMEAQERDRTGISSLKIRYNKVFGYYIEVTKSNLSSVPDNYIRRQTIATGERYITEELKSYEEKVLGAEDRICELEYTLFQEVRERTAAQGGRVSRTASALASLDVLASLALVAQERDYCKPVVDDGDTLEIIEGRHPVVEAMNLGERFVPNDTRLDQEQHQLLMITGPNMAGKSTYMRQVALITLMAQVGSFVPASRATIGIADQIFTRVGAGDNLARGQSTFMVEMMETAHILRSATTKSLVVLDEIGRGTSTFDGLSIAWAVAEYLHDTNHCKARTLFATHYHELADLAATREGITNLTVAVKEWNDQVIFLRTIIPGAASHSYGIQVARLAGMPRNVIERAKEVLKTLEEGEFEQGSPRLSKSSIAPPRKETAQFTLFEQQGDLLRERLKKLNISVMTPLEALNLLDELKKMA</sequence>
<feature type="chain" id="PRO_1000118684" description="DNA mismatch repair protein MutS">
    <location>
        <begin position="1"/>
        <end position="872"/>
    </location>
</feature>
<feature type="binding site" evidence="1">
    <location>
        <begin position="623"/>
        <end position="630"/>
    </location>
    <ligand>
        <name>ATP</name>
        <dbReference type="ChEBI" id="CHEBI:30616"/>
    </ligand>
</feature>
<gene>
    <name evidence="1" type="primary">mutS</name>
    <name type="ordered locus">Glov_1145</name>
</gene>
<accession>B3E6P2</accession>
<evidence type="ECO:0000255" key="1">
    <source>
        <dbReference type="HAMAP-Rule" id="MF_00096"/>
    </source>
</evidence>
<organism>
    <name type="scientific">Trichlorobacter lovleyi (strain ATCC BAA-1151 / DSM 17278 / SZ)</name>
    <name type="common">Geobacter lovleyi</name>
    <dbReference type="NCBI Taxonomy" id="398767"/>
    <lineage>
        <taxon>Bacteria</taxon>
        <taxon>Pseudomonadati</taxon>
        <taxon>Thermodesulfobacteriota</taxon>
        <taxon>Desulfuromonadia</taxon>
        <taxon>Geobacterales</taxon>
        <taxon>Geobacteraceae</taxon>
        <taxon>Trichlorobacter</taxon>
    </lineage>
</organism>
<reference key="1">
    <citation type="submission" date="2008-05" db="EMBL/GenBank/DDBJ databases">
        <title>Complete sequence of chromosome of Geobacter lovleyi SZ.</title>
        <authorList>
            <consortium name="US DOE Joint Genome Institute"/>
            <person name="Lucas S."/>
            <person name="Copeland A."/>
            <person name="Lapidus A."/>
            <person name="Glavina del Rio T."/>
            <person name="Dalin E."/>
            <person name="Tice H."/>
            <person name="Bruce D."/>
            <person name="Goodwin L."/>
            <person name="Pitluck S."/>
            <person name="Chertkov O."/>
            <person name="Meincke L."/>
            <person name="Brettin T."/>
            <person name="Detter J.C."/>
            <person name="Han C."/>
            <person name="Tapia R."/>
            <person name="Kuske C.R."/>
            <person name="Schmutz J."/>
            <person name="Larimer F."/>
            <person name="Land M."/>
            <person name="Hauser L."/>
            <person name="Kyrpides N."/>
            <person name="Mikhailova N."/>
            <person name="Sung Y."/>
            <person name="Fletcher K.E."/>
            <person name="Ritalahti K.M."/>
            <person name="Loeffler F.E."/>
            <person name="Richardson P."/>
        </authorList>
    </citation>
    <scope>NUCLEOTIDE SEQUENCE [LARGE SCALE GENOMIC DNA]</scope>
    <source>
        <strain>ATCC BAA-1151 / DSM 17278 / SZ</strain>
    </source>
</reference>
<dbReference type="EMBL" id="CP001089">
    <property type="protein sequence ID" value="ACD94867.1"/>
    <property type="molecule type" value="Genomic_DNA"/>
</dbReference>
<dbReference type="RefSeq" id="WP_012469216.1">
    <property type="nucleotide sequence ID" value="NC_010814.1"/>
</dbReference>
<dbReference type="SMR" id="B3E6P2"/>
<dbReference type="STRING" id="398767.Glov_1145"/>
<dbReference type="KEGG" id="glo:Glov_1145"/>
<dbReference type="eggNOG" id="COG0249">
    <property type="taxonomic scope" value="Bacteria"/>
</dbReference>
<dbReference type="HOGENOM" id="CLU_002472_3_0_7"/>
<dbReference type="OrthoDB" id="9802448at2"/>
<dbReference type="Proteomes" id="UP000002420">
    <property type="component" value="Chromosome"/>
</dbReference>
<dbReference type="GO" id="GO:0005829">
    <property type="term" value="C:cytosol"/>
    <property type="evidence" value="ECO:0007669"/>
    <property type="project" value="TreeGrafter"/>
</dbReference>
<dbReference type="GO" id="GO:0005524">
    <property type="term" value="F:ATP binding"/>
    <property type="evidence" value="ECO:0007669"/>
    <property type="project" value="UniProtKB-UniRule"/>
</dbReference>
<dbReference type="GO" id="GO:0140664">
    <property type="term" value="F:ATP-dependent DNA damage sensor activity"/>
    <property type="evidence" value="ECO:0007669"/>
    <property type="project" value="InterPro"/>
</dbReference>
<dbReference type="GO" id="GO:0003684">
    <property type="term" value="F:damaged DNA binding"/>
    <property type="evidence" value="ECO:0007669"/>
    <property type="project" value="UniProtKB-UniRule"/>
</dbReference>
<dbReference type="GO" id="GO:0030983">
    <property type="term" value="F:mismatched DNA binding"/>
    <property type="evidence" value="ECO:0007669"/>
    <property type="project" value="InterPro"/>
</dbReference>
<dbReference type="GO" id="GO:0006298">
    <property type="term" value="P:mismatch repair"/>
    <property type="evidence" value="ECO:0007669"/>
    <property type="project" value="UniProtKB-UniRule"/>
</dbReference>
<dbReference type="CDD" id="cd03284">
    <property type="entry name" value="ABC_MutS1"/>
    <property type="match status" value="1"/>
</dbReference>
<dbReference type="FunFam" id="1.10.1420.10:FF:000001">
    <property type="entry name" value="DNA mismatch repair protein MutS"/>
    <property type="match status" value="1"/>
</dbReference>
<dbReference type="FunFam" id="3.40.1170.10:FF:000001">
    <property type="entry name" value="DNA mismatch repair protein MutS"/>
    <property type="match status" value="1"/>
</dbReference>
<dbReference type="FunFam" id="3.40.50.300:FF:000870">
    <property type="entry name" value="MutS protein homolog 4"/>
    <property type="match status" value="1"/>
</dbReference>
<dbReference type="Gene3D" id="1.10.1420.10">
    <property type="match status" value="2"/>
</dbReference>
<dbReference type="Gene3D" id="3.40.1170.10">
    <property type="entry name" value="DNA repair protein MutS, domain I"/>
    <property type="match status" value="1"/>
</dbReference>
<dbReference type="Gene3D" id="3.30.420.110">
    <property type="entry name" value="MutS, connector domain"/>
    <property type="match status" value="1"/>
</dbReference>
<dbReference type="Gene3D" id="3.40.50.300">
    <property type="entry name" value="P-loop containing nucleotide triphosphate hydrolases"/>
    <property type="match status" value="1"/>
</dbReference>
<dbReference type="HAMAP" id="MF_00096">
    <property type="entry name" value="MutS"/>
    <property type="match status" value="1"/>
</dbReference>
<dbReference type="InterPro" id="IPR005748">
    <property type="entry name" value="DNA_mismatch_repair_MutS"/>
</dbReference>
<dbReference type="InterPro" id="IPR007695">
    <property type="entry name" value="DNA_mismatch_repair_MutS-lik_N"/>
</dbReference>
<dbReference type="InterPro" id="IPR017261">
    <property type="entry name" value="DNA_mismatch_repair_MutS/MSH"/>
</dbReference>
<dbReference type="InterPro" id="IPR000432">
    <property type="entry name" value="DNA_mismatch_repair_MutS_C"/>
</dbReference>
<dbReference type="InterPro" id="IPR007861">
    <property type="entry name" value="DNA_mismatch_repair_MutS_clamp"/>
</dbReference>
<dbReference type="InterPro" id="IPR007696">
    <property type="entry name" value="DNA_mismatch_repair_MutS_core"/>
</dbReference>
<dbReference type="InterPro" id="IPR016151">
    <property type="entry name" value="DNA_mismatch_repair_MutS_N"/>
</dbReference>
<dbReference type="InterPro" id="IPR036187">
    <property type="entry name" value="DNA_mismatch_repair_MutS_sf"/>
</dbReference>
<dbReference type="InterPro" id="IPR007860">
    <property type="entry name" value="DNA_mmatch_repair_MutS_con_dom"/>
</dbReference>
<dbReference type="InterPro" id="IPR045076">
    <property type="entry name" value="MutS"/>
</dbReference>
<dbReference type="InterPro" id="IPR036678">
    <property type="entry name" value="MutS_con_dom_sf"/>
</dbReference>
<dbReference type="InterPro" id="IPR027417">
    <property type="entry name" value="P-loop_NTPase"/>
</dbReference>
<dbReference type="NCBIfam" id="TIGR01070">
    <property type="entry name" value="mutS1"/>
    <property type="match status" value="1"/>
</dbReference>
<dbReference type="NCBIfam" id="NF003810">
    <property type="entry name" value="PRK05399.1"/>
    <property type="match status" value="1"/>
</dbReference>
<dbReference type="PANTHER" id="PTHR11361:SF34">
    <property type="entry name" value="DNA MISMATCH REPAIR PROTEIN MSH1, MITOCHONDRIAL"/>
    <property type="match status" value="1"/>
</dbReference>
<dbReference type="PANTHER" id="PTHR11361">
    <property type="entry name" value="DNA MISMATCH REPAIR PROTEIN MUTS FAMILY MEMBER"/>
    <property type="match status" value="1"/>
</dbReference>
<dbReference type="Pfam" id="PF01624">
    <property type="entry name" value="MutS_I"/>
    <property type="match status" value="1"/>
</dbReference>
<dbReference type="Pfam" id="PF05188">
    <property type="entry name" value="MutS_II"/>
    <property type="match status" value="1"/>
</dbReference>
<dbReference type="Pfam" id="PF05192">
    <property type="entry name" value="MutS_III"/>
    <property type="match status" value="1"/>
</dbReference>
<dbReference type="Pfam" id="PF05190">
    <property type="entry name" value="MutS_IV"/>
    <property type="match status" value="1"/>
</dbReference>
<dbReference type="Pfam" id="PF00488">
    <property type="entry name" value="MutS_V"/>
    <property type="match status" value="1"/>
</dbReference>
<dbReference type="PIRSF" id="PIRSF037677">
    <property type="entry name" value="DNA_mis_repair_Msh6"/>
    <property type="match status" value="1"/>
</dbReference>
<dbReference type="SMART" id="SM00534">
    <property type="entry name" value="MUTSac"/>
    <property type="match status" value="1"/>
</dbReference>
<dbReference type="SMART" id="SM00533">
    <property type="entry name" value="MUTSd"/>
    <property type="match status" value="1"/>
</dbReference>
<dbReference type="SUPFAM" id="SSF55271">
    <property type="entry name" value="DNA repair protein MutS, domain I"/>
    <property type="match status" value="1"/>
</dbReference>
<dbReference type="SUPFAM" id="SSF53150">
    <property type="entry name" value="DNA repair protein MutS, domain II"/>
    <property type="match status" value="1"/>
</dbReference>
<dbReference type="SUPFAM" id="SSF48334">
    <property type="entry name" value="DNA repair protein MutS, domain III"/>
    <property type="match status" value="1"/>
</dbReference>
<dbReference type="SUPFAM" id="SSF52540">
    <property type="entry name" value="P-loop containing nucleoside triphosphate hydrolases"/>
    <property type="match status" value="1"/>
</dbReference>
<dbReference type="PROSITE" id="PS00486">
    <property type="entry name" value="DNA_MISMATCH_REPAIR_2"/>
    <property type="match status" value="1"/>
</dbReference>
<comment type="function">
    <text evidence="1">This protein is involved in the repair of mismatches in DNA. It is possible that it carries out the mismatch recognition step. This protein has a weak ATPase activity.</text>
</comment>
<comment type="similarity">
    <text evidence="1">Belongs to the DNA mismatch repair MutS family.</text>
</comment>
<proteinExistence type="inferred from homology"/>
<protein>
    <recommendedName>
        <fullName evidence="1">DNA mismatch repair protein MutS</fullName>
    </recommendedName>
</protein>